<comment type="function">
    <text evidence="1">Catalyzes the excretion of spermidine.</text>
</comment>
<comment type="subunit">
    <text evidence="1">Forms a complex with MdtI.</text>
</comment>
<comment type="subcellular location">
    <subcellularLocation>
        <location evidence="1">Cell inner membrane</location>
        <topology evidence="1">Multi-pass membrane protein</topology>
    </subcellularLocation>
</comment>
<comment type="similarity">
    <text evidence="1">Belongs to the drug/metabolite transporter (DMT) superfamily. Small multidrug resistance (SMR) (TC 2.A.7.1) family. MdtJ subfamily.</text>
</comment>
<feature type="chain" id="PRO_1000197345" description="Spermidine export protein MdtJ">
    <location>
        <begin position="1"/>
        <end position="147"/>
    </location>
</feature>
<feature type="transmembrane region" description="Helical" evidence="1">
    <location>
        <begin position="1"/>
        <end position="21"/>
    </location>
</feature>
<feature type="transmembrane region" description="Helical" evidence="1">
    <location>
        <begin position="31"/>
        <end position="51"/>
    </location>
</feature>
<feature type="transmembrane region" description="Helical" evidence="1">
    <location>
        <begin position="54"/>
        <end position="74"/>
    </location>
</feature>
<feature type="transmembrane region" description="Helical" evidence="1">
    <location>
        <begin position="81"/>
        <end position="101"/>
    </location>
</feature>
<feature type="region of interest" description="Disordered" evidence="2">
    <location>
        <begin position="105"/>
        <end position="147"/>
    </location>
</feature>
<feature type="compositionally biased region" description="Basic residues" evidence="2">
    <location>
        <begin position="105"/>
        <end position="117"/>
    </location>
</feature>
<accession>B1JLJ8</accession>
<sequence>MIYWIFLGLAIIAEIIGTLSMKYASVSGEMTGHIVMYFMITGSYVMLSLAVKKVALGVAYALWEGIGILIITIFSVMWFGETLSPLKIAGLVTLIGGILLVKSGTRKPKQPNRHRGNRPPSVQGLKTQTTGHHKGVAVESGEHHAAA</sequence>
<proteinExistence type="inferred from homology"/>
<evidence type="ECO:0000255" key="1">
    <source>
        <dbReference type="HAMAP-Rule" id="MF_01598"/>
    </source>
</evidence>
<evidence type="ECO:0000256" key="2">
    <source>
        <dbReference type="SAM" id="MobiDB-lite"/>
    </source>
</evidence>
<name>MDTJ_YERPY</name>
<gene>
    <name evidence="1" type="primary">mdtJ</name>
    <name type="ordered locus">YPK_2131</name>
</gene>
<reference key="1">
    <citation type="submission" date="2008-02" db="EMBL/GenBank/DDBJ databases">
        <title>Complete sequence of Yersinia pseudotuberculosis YPIII.</title>
        <authorList>
            <consortium name="US DOE Joint Genome Institute"/>
            <person name="Copeland A."/>
            <person name="Lucas S."/>
            <person name="Lapidus A."/>
            <person name="Glavina del Rio T."/>
            <person name="Dalin E."/>
            <person name="Tice H."/>
            <person name="Bruce D."/>
            <person name="Goodwin L."/>
            <person name="Pitluck S."/>
            <person name="Munk A.C."/>
            <person name="Brettin T."/>
            <person name="Detter J.C."/>
            <person name="Han C."/>
            <person name="Tapia R."/>
            <person name="Schmutz J."/>
            <person name="Larimer F."/>
            <person name="Land M."/>
            <person name="Hauser L."/>
            <person name="Challacombe J.F."/>
            <person name="Green L."/>
            <person name="Lindler L.E."/>
            <person name="Nikolich M.P."/>
            <person name="Richardson P."/>
        </authorList>
    </citation>
    <scope>NUCLEOTIDE SEQUENCE [LARGE SCALE GENOMIC DNA]</scope>
    <source>
        <strain>YPIII</strain>
    </source>
</reference>
<dbReference type="EMBL" id="CP000950">
    <property type="protein sequence ID" value="ACA68417.1"/>
    <property type="molecule type" value="Genomic_DNA"/>
</dbReference>
<dbReference type="RefSeq" id="WP_012105125.1">
    <property type="nucleotide sequence ID" value="NZ_CP009792.1"/>
</dbReference>
<dbReference type="SMR" id="B1JLJ8"/>
<dbReference type="KEGG" id="ypy:YPK_2131"/>
<dbReference type="PATRIC" id="fig|502800.11.peg.2805"/>
<dbReference type="GO" id="GO:0005886">
    <property type="term" value="C:plasma membrane"/>
    <property type="evidence" value="ECO:0007669"/>
    <property type="project" value="UniProtKB-SubCell"/>
</dbReference>
<dbReference type="GO" id="GO:0015199">
    <property type="term" value="F:amino-acid betaine transmembrane transporter activity"/>
    <property type="evidence" value="ECO:0007669"/>
    <property type="project" value="TreeGrafter"/>
</dbReference>
<dbReference type="GO" id="GO:0015297">
    <property type="term" value="F:antiporter activity"/>
    <property type="evidence" value="ECO:0007669"/>
    <property type="project" value="TreeGrafter"/>
</dbReference>
<dbReference type="GO" id="GO:0015220">
    <property type="term" value="F:choline transmembrane transporter activity"/>
    <property type="evidence" value="ECO:0007669"/>
    <property type="project" value="TreeGrafter"/>
</dbReference>
<dbReference type="GO" id="GO:0015606">
    <property type="term" value="F:spermidine transmembrane transporter activity"/>
    <property type="evidence" value="ECO:0007669"/>
    <property type="project" value="UniProtKB-UniRule"/>
</dbReference>
<dbReference type="GO" id="GO:0031460">
    <property type="term" value="P:glycine betaine transport"/>
    <property type="evidence" value="ECO:0007669"/>
    <property type="project" value="TreeGrafter"/>
</dbReference>
<dbReference type="FunFam" id="1.10.3730.20:FF:000001">
    <property type="entry name" value="Quaternary ammonium compound resistance transporter SugE"/>
    <property type="match status" value="1"/>
</dbReference>
<dbReference type="Gene3D" id="1.10.3730.20">
    <property type="match status" value="1"/>
</dbReference>
<dbReference type="HAMAP" id="MF_01598">
    <property type="entry name" value="MdtJ"/>
    <property type="match status" value="1"/>
</dbReference>
<dbReference type="InterPro" id="IPR000390">
    <property type="entry name" value="Small_drug/metabolite_transptr"/>
</dbReference>
<dbReference type="InterPro" id="IPR045324">
    <property type="entry name" value="Small_multidrug_res"/>
</dbReference>
<dbReference type="InterPro" id="IPR023740">
    <property type="entry name" value="Spermidine_export_MdtJ"/>
</dbReference>
<dbReference type="NCBIfam" id="NF007767">
    <property type="entry name" value="PRK10452.1"/>
    <property type="match status" value="1"/>
</dbReference>
<dbReference type="PANTHER" id="PTHR30561">
    <property type="entry name" value="SMR FAMILY PROTON-DEPENDENT DRUG EFFLUX TRANSPORTER SUGE"/>
    <property type="match status" value="1"/>
</dbReference>
<dbReference type="PANTHER" id="PTHR30561:SF2">
    <property type="entry name" value="SPERMIDINE EXPORT PROTEIN MDTJ"/>
    <property type="match status" value="1"/>
</dbReference>
<dbReference type="Pfam" id="PF00893">
    <property type="entry name" value="Multi_Drug_Res"/>
    <property type="match status" value="1"/>
</dbReference>
<dbReference type="SUPFAM" id="SSF103481">
    <property type="entry name" value="Multidrug resistance efflux transporter EmrE"/>
    <property type="match status" value="1"/>
</dbReference>
<organism>
    <name type="scientific">Yersinia pseudotuberculosis serotype O:3 (strain YPIII)</name>
    <dbReference type="NCBI Taxonomy" id="502800"/>
    <lineage>
        <taxon>Bacteria</taxon>
        <taxon>Pseudomonadati</taxon>
        <taxon>Pseudomonadota</taxon>
        <taxon>Gammaproteobacteria</taxon>
        <taxon>Enterobacterales</taxon>
        <taxon>Yersiniaceae</taxon>
        <taxon>Yersinia</taxon>
    </lineage>
</organism>
<protein>
    <recommendedName>
        <fullName evidence="1">Spermidine export protein MdtJ</fullName>
    </recommendedName>
</protein>
<keyword id="KW-0997">Cell inner membrane</keyword>
<keyword id="KW-1003">Cell membrane</keyword>
<keyword id="KW-0472">Membrane</keyword>
<keyword id="KW-0812">Transmembrane</keyword>
<keyword id="KW-1133">Transmembrane helix</keyword>
<keyword id="KW-0813">Transport</keyword>